<name>ACCA_CLOPE</name>
<proteinExistence type="inferred from homology"/>
<organism>
    <name type="scientific">Clostridium perfringens (strain 13 / Type A)</name>
    <dbReference type="NCBI Taxonomy" id="195102"/>
    <lineage>
        <taxon>Bacteria</taxon>
        <taxon>Bacillati</taxon>
        <taxon>Bacillota</taxon>
        <taxon>Clostridia</taxon>
        <taxon>Eubacteriales</taxon>
        <taxon>Clostridiaceae</taxon>
        <taxon>Clostridium</taxon>
    </lineage>
</organism>
<protein>
    <recommendedName>
        <fullName evidence="1">Acetyl-coenzyme A carboxylase carboxyl transferase subunit alpha</fullName>
        <shortName evidence="1">ACCase subunit alpha</shortName>
        <shortName evidence="1">Acetyl-CoA carboxylase carboxyltransferase subunit alpha</shortName>
        <ecNumber evidence="1">2.1.3.15</ecNumber>
    </recommendedName>
</protein>
<reference key="1">
    <citation type="journal article" date="2002" name="Proc. Natl. Acad. Sci. U.S.A.">
        <title>Complete genome sequence of Clostridium perfringens, an anaerobic flesh-eater.</title>
        <authorList>
            <person name="Shimizu T."/>
            <person name="Ohtani K."/>
            <person name="Hirakawa H."/>
            <person name="Ohshima K."/>
            <person name="Yamashita A."/>
            <person name="Shiba T."/>
            <person name="Ogasawara N."/>
            <person name="Hattori M."/>
            <person name="Kuhara S."/>
            <person name="Hayashi H."/>
        </authorList>
    </citation>
    <scope>NUCLEOTIDE SEQUENCE [LARGE SCALE GENOMIC DNA]</scope>
    <source>
        <strain>13 / Type A</strain>
    </source>
</reference>
<feature type="chain" id="PRO_0000223761" description="Acetyl-coenzyme A carboxylase carboxyl transferase subunit alpha">
    <location>
        <begin position="1"/>
        <end position="271"/>
    </location>
</feature>
<feature type="domain" description="CoA carboxyltransferase C-terminal" evidence="2">
    <location>
        <begin position="1"/>
        <end position="247"/>
    </location>
</feature>
<keyword id="KW-0067">ATP-binding</keyword>
<keyword id="KW-0963">Cytoplasm</keyword>
<keyword id="KW-0275">Fatty acid biosynthesis</keyword>
<keyword id="KW-0276">Fatty acid metabolism</keyword>
<keyword id="KW-0444">Lipid biosynthesis</keyword>
<keyword id="KW-0443">Lipid metabolism</keyword>
<keyword id="KW-0547">Nucleotide-binding</keyword>
<keyword id="KW-1185">Reference proteome</keyword>
<keyword id="KW-0808">Transferase</keyword>
<sequence>MSRELIRTADAWNKVKIARDPNRPNAKFYINEIFDEFIELHGDRNFGDDKAIIGGIALLNNLSFTVVGICKGENTKENIKRNFGMPHPEGYRKALRLMKQAEKFKRPVICFVDTPGAFCGIGAEERGQGQAIAQNLVELMGLKVPLISIVIGEGGSGGALALAVADKVFMLEHSIYSVLSPEGFASILWKDSSRAEEAASVMKITAQDLKSFNIIDKIIKEPRGGAHKNPIKMAQNIKKTILEALGEMKGTDLDTLLNERYNKYRNIENNL</sequence>
<accession>Q8XLG5</accession>
<comment type="function">
    <text evidence="1">Component of the acetyl coenzyme A carboxylase (ACC) complex. First, biotin carboxylase catalyzes the carboxylation of biotin on its carrier protein (BCCP) and then the CO(2) group is transferred by the carboxyltransferase to acetyl-CoA to form malonyl-CoA.</text>
</comment>
<comment type="catalytic activity">
    <reaction evidence="1">
        <text>N(6)-carboxybiotinyl-L-lysyl-[protein] + acetyl-CoA = N(6)-biotinyl-L-lysyl-[protein] + malonyl-CoA</text>
        <dbReference type="Rhea" id="RHEA:54728"/>
        <dbReference type="Rhea" id="RHEA-COMP:10505"/>
        <dbReference type="Rhea" id="RHEA-COMP:10506"/>
        <dbReference type="ChEBI" id="CHEBI:57288"/>
        <dbReference type="ChEBI" id="CHEBI:57384"/>
        <dbReference type="ChEBI" id="CHEBI:83144"/>
        <dbReference type="ChEBI" id="CHEBI:83145"/>
        <dbReference type="EC" id="2.1.3.15"/>
    </reaction>
</comment>
<comment type="pathway">
    <text evidence="1">Lipid metabolism; malonyl-CoA biosynthesis; malonyl-CoA from acetyl-CoA: step 1/1.</text>
</comment>
<comment type="subunit">
    <text evidence="1">Acetyl-CoA carboxylase is a heterohexamer composed of biotin carboxyl carrier protein (AccB), biotin carboxylase (AccC) and two subunits each of ACCase subunit alpha (AccA) and ACCase subunit beta (AccD).</text>
</comment>
<comment type="subcellular location">
    <subcellularLocation>
        <location evidence="1">Cytoplasm</location>
    </subcellularLocation>
</comment>
<comment type="similarity">
    <text evidence="1">Belongs to the AccA family.</text>
</comment>
<dbReference type="EC" id="2.1.3.15" evidence="1"/>
<dbReference type="EMBL" id="BA000016">
    <property type="protein sequence ID" value="BAB80782.1"/>
    <property type="molecule type" value="Genomic_DNA"/>
</dbReference>
<dbReference type="RefSeq" id="WP_011010223.1">
    <property type="nucleotide sequence ID" value="NC_003366.1"/>
</dbReference>
<dbReference type="SMR" id="Q8XLG5"/>
<dbReference type="STRING" id="195102.gene:10490339"/>
<dbReference type="KEGG" id="cpe:CPE1076"/>
<dbReference type="HOGENOM" id="CLU_015486_0_2_9"/>
<dbReference type="UniPathway" id="UPA00655">
    <property type="reaction ID" value="UER00711"/>
</dbReference>
<dbReference type="Proteomes" id="UP000000818">
    <property type="component" value="Chromosome"/>
</dbReference>
<dbReference type="GO" id="GO:0009317">
    <property type="term" value="C:acetyl-CoA carboxylase complex"/>
    <property type="evidence" value="ECO:0007669"/>
    <property type="project" value="InterPro"/>
</dbReference>
<dbReference type="GO" id="GO:0003989">
    <property type="term" value="F:acetyl-CoA carboxylase activity"/>
    <property type="evidence" value="ECO:0007669"/>
    <property type="project" value="InterPro"/>
</dbReference>
<dbReference type="GO" id="GO:0005524">
    <property type="term" value="F:ATP binding"/>
    <property type="evidence" value="ECO:0007669"/>
    <property type="project" value="UniProtKB-KW"/>
</dbReference>
<dbReference type="GO" id="GO:0016743">
    <property type="term" value="F:carboxyl- or carbamoyltransferase activity"/>
    <property type="evidence" value="ECO:0007669"/>
    <property type="project" value="UniProtKB-UniRule"/>
</dbReference>
<dbReference type="GO" id="GO:0006633">
    <property type="term" value="P:fatty acid biosynthetic process"/>
    <property type="evidence" value="ECO:0007669"/>
    <property type="project" value="UniProtKB-KW"/>
</dbReference>
<dbReference type="GO" id="GO:2001295">
    <property type="term" value="P:malonyl-CoA biosynthetic process"/>
    <property type="evidence" value="ECO:0007669"/>
    <property type="project" value="UniProtKB-UniRule"/>
</dbReference>
<dbReference type="Gene3D" id="3.90.226.10">
    <property type="entry name" value="2-enoyl-CoA Hydratase, Chain A, domain 1"/>
    <property type="match status" value="1"/>
</dbReference>
<dbReference type="HAMAP" id="MF_00823">
    <property type="entry name" value="AcetylCoA_CT_alpha"/>
    <property type="match status" value="1"/>
</dbReference>
<dbReference type="InterPro" id="IPR001095">
    <property type="entry name" value="Acetyl_CoA_COase_a_su"/>
</dbReference>
<dbReference type="InterPro" id="IPR029045">
    <property type="entry name" value="ClpP/crotonase-like_dom_sf"/>
</dbReference>
<dbReference type="InterPro" id="IPR011763">
    <property type="entry name" value="COA_CT_C"/>
</dbReference>
<dbReference type="NCBIfam" id="TIGR00513">
    <property type="entry name" value="accA"/>
    <property type="match status" value="1"/>
</dbReference>
<dbReference type="NCBIfam" id="NF041504">
    <property type="entry name" value="AccA_sub"/>
    <property type="match status" value="1"/>
</dbReference>
<dbReference type="NCBIfam" id="NF004344">
    <property type="entry name" value="PRK05724.1"/>
    <property type="match status" value="1"/>
</dbReference>
<dbReference type="PANTHER" id="PTHR42853">
    <property type="entry name" value="ACETYL-COENZYME A CARBOXYLASE CARBOXYL TRANSFERASE SUBUNIT ALPHA"/>
    <property type="match status" value="1"/>
</dbReference>
<dbReference type="PANTHER" id="PTHR42853:SF3">
    <property type="entry name" value="ACETYL-COENZYME A CARBOXYLASE CARBOXYL TRANSFERASE SUBUNIT ALPHA, CHLOROPLASTIC"/>
    <property type="match status" value="1"/>
</dbReference>
<dbReference type="Pfam" id="PF03255">
    <property type="entry name" value="ACCA"/>
    <property type="match status" value="1"/>
</dbReference>
<dbReference type="PRINTS" id="PR01069">
    <property type="entry name" value="ACCCTRFRASEA"/>
</dbReference>
<dbReference type="SUPFAM" id="SSF52096">
    <property type="entry name" value="ClpP/crotonase"/>
    <property type="match status" value="1"/>
</dbReference>
<dbReference type="PROSITE" id="PS50989">
    <property type="entry name" value="COA_CT_CTER"/>
    <property type="match status" value="1"/>
</dbReference>
<gene>
    <name evidence="1" type="primary">accA</name>
    <name type="ordered locus">CPE1076</name>
</gene>
<evidence type="ECO:0000255" key="1">
    <source>
        <dbReference type="HAMAP-Rule" id="MF_00823"/>
    </source>
</evidence>
<evidence type="ECO:0000255" key="2">
    <source>
        <dbReference type="PROSITE-ProRule" id="PRU01137"/>
    </source>
</evidence>